<keyword id="KW-0067">ATP-binding</keyword>
<keyword id="KW-0963">Cytoplasm</keyword>
<keyword id="KW-0436">Ligase</keyword>
<keyword id="KW-0460">Magnesium</keyword>
<keyword id="KW-0479">Metal-binding</keyword>
<keyword id="KW-0547">Nucleotide-binding</keyword>
<keyword id="KW-0658">Purine biosynthesis</keyword>
<sequence>MPNMEPTTKEIKEQKIYQEMGLTDSEYELVCSILGREPNYTETGLFSVMWSEHCSYKNSKPVLRKFPTEGKQVLQGPGEGAGIVDIGDGLGVAFKVESHNHPSYVEPYQGAATGVGGIIRDVFSMGARPIAMLNSLRFGELDTPHAKYLVSEVVAGIAGYGNSIGIPTVGGEIQFDPCYTKNPLVNAMCVGLIEAKDIQKGQAKGIGNPVMYVGAKTGRDGIHGATFASVEFSEEGEQQRSAVQVGDPFMEKLLLEACLDVIRDHSDILVGIQDMGAAGLVSSSSEMASKAGAGLELIMDDVPQRELNMTPYEMLLSESQERMLLCVKKGHVEEIQALFERYGLEAVVIGQVTDDKMYKIIHHGEVVANVPVDALAEDAPVYHKPSKEPARYQAFQEEKAFVPAMDDVVGVWKELLAQPTIASKRHIYEQYDYQVRTDTAVVPGSDAAIVRVRGTEKAIAMTTDCNSRYLYLDPEVGGAIAVAEAARNIVCSGGKPLAITDGLNFGNPEKPEIFWEIEKAADGISAACLELDTPVISGNVSLYNETDGTGIYPTPVIGMVGLVEDLAHITTQDFKNSGDVIFLIGETKAEYSGSELQKLQQGKISGRAPELDLATEKKYQQLLLTAIQEGLVASSHDLAEGGFGVALAEATFKAGLGADVEVPFALNQLFSESQSRFLVSVKPENEAAFAQLMELEKVYRLGVVTEDDTIRVKHKEDQVTAKTTELRSIWEGAIPCLLK</sequence>
<protein>
    <recommendedName>
        <fullName evidence="1">Phosphoribosylformylglycinamidine synthase subunit PurL</fullName>
        <shortName evidence="1">FGAM synthase</shortName>
        <ecNumber evidence="1">6.3.5.3</ecNumber>
    </recommendedName>
    <alternativeName>
        <fullName evidence="1">Formylglycinamide ribonucleotide amidotransferase subunit II</fullName>
        <shortName evidence="1">FGAR amidotransferase II</shortName>
        <shortName evidence="1">FGAR-AT II</shortName>
    </alternativeName>
    <alternativeName>
        <fullName evidence="1">Glutamine amidotransferase PurL</fullName>
    </alternativeName>
    <alternativeName>
        <fullName evidence="1">Phosphoribosylformylglycinamidine synthase subunit II</fullName>
    </alternativeName>
</protein>
<evidence type="ECO:0000255" key="1">
    <source>
        <dbReference type="HAMAP-Rule" id="MF_00420"/>
    </source>
</evidence>
<feature type="chain" id="PRO_1000134900" description="Phosphoribosylformylglycinamidine synthase subunit PurL">
    <location>
        <begin position="1"/>
        <end position="739"/>
    </location>
</feature>
<feature type="active site" evidence="1">
    <location>
        <position position="53"/>
    </location>
</feature>
<feature type="active site" description="Proton acceptor" evidence="1">
    <location>
        <position position="99"/>
    </location>
</feature>
<feature type="binding site" evidence="1">
    <location>
        <position position="56"/>
    </location>
    <ligand>
        <name>ATP</name>
        <dbReference type="ChEBI" id="CHEBI:30616"/>
    </ligand>
</feature>
<feature type="binding site" evidence="1">
    <location>
        <position position="95"/>
    </location>
    <ligand>
        <name>ATP</name>
        <dbReference type="ChEBI" id="CHEBI:30616"/>
    </ligand>
</feature>
<feature type="binding site" evidence="1">
    <location>
        <position position="97"/>
    </location>
    <ligand>
        <name>Mg(2+)</name>
        <dbReference type="ChEBI" id="CHEBI:18420"/>
        <label>1</label>
    </ligand>
</feature>
<feature type="binding site" evidence="1">
    <location>
        <begin position="98"/>
        <end position="101"/>
    </location>
    <ligand>
        <name>substrate</name>
    </ligand>
</feature>
<feature type="binding site" evidence="1">
    <location>
        <position position="120"/>
    </location>
    <ligand>
        <name>substrate</name>
    </ligand>
</feature>
<feature type="binding site" evidence="1">
    <location>
        <position position="121"/>
    </location>
    <ligand>
        <name>Mg(2+)</name>
        <dbReference type="ChEBI" id="CHEBI:18420"/>
        <label>2</label>
    </ligand>
</feature>
<feature type="binding site" evidence="1">
    <location>
        <position position="244"/>
    </location>
    <ligand>
        <name>substrate</name>
    </ligand>
</feature>
<feature type="binding site" evidence="1">
    <location>
        <position position="274"/>
    </location>
    <ligand>
        <name>Mg(2+)</name>
        <dbReference type="ChEBI" id="CHEBI:18420"/>
        <label>2</label>
    </ligand>
</feature>
<feature type="binding site" evidence="1">
    <location>
        <begin position="318"/>
        <end position="320"/>
    </location>
    <ligand>
        <name>substrate</name>
    </ligand>
</feature>
<feature type="binding site" evidence="1">
    <location>
        <position position="501"/>
    </location>
    <ligand>
        <name>ATP</name>
        <dbReference type="ChEBI" id="CHEBI:30616"/>
    </ligand>
</feature>
<feature type="binding site" evidence="1">
    <location>
        <position position="538"/>
    </location>
    <ligand>
        <name>ATP</name>
        <dbReference type="ChEBI" id="CHEBI:30616"/>
    </ligand>
</feature>
<feature type="binding site" evidence="1">
    <location>
        <position position="539"/>
    </location>
    <ligand>
        <name>Mg(2+)</name>
        <dbReference type="ChEBI" id="CHEBI:18420"/>
        <label>1</label>
    </ligand>
</feature>
<feature type="binding site" evidence="1">
    <location>
        <position position="541"/>
    </location>
    <ligand>
        <name>substrate</name>
    </ligand>
</feature>
<reference key="1">
    <citation type="journal article" date="2011" name="J. Bacteriol.">
        <title>Genome sequence of lineage III Listeria monocytogenes strain HCC23.</title>
        <authorList>
            <person name="Steele C.L."/>
            <person name="Donaldson J.R."/>
            <person name="Paul D."/>
            <person name="Banes M.M."/>
            <person name="Arick T."/>
            <person name="Bridges S.M."/>
            <person name="Lawrence M.L."/>
        </authorList>
    </citation>
    <scope>NUCLEOTIDE SEQUENCE [LARGE SCALE GENOMIC DNA]</scope>
    <source>
        <strain>HCC23</strain>
    </source>
</reference>
<comment type="function">
    <text evidence="1">Part of the phosphoribosylformylglycinamidine synthase complex involved in the purines biosynthetic pathway. Catalyzes the ATP-dependent conversion of formylglycinamide ribonucleotide (FGAR) and glutamine to yield formylglycinamidine ribonucleotide (FGAM) and glutamate. The FGAM synthase complex is composed of three subunits. PurQ produces an ammonia molecule by converting glutamine to glutamate. PurL transfers the ammonia molecule to FGAR to form FGAM in an ATP-dependent manner. PurS interacts with PurQ and PurL and is thought to assist in the transfer of the ammonia molecule from PurQ to PurL.</text>
</comment>
<comment type="catalytic activity">
    <reaction evidence="1">
        <text>N(2)-formyl-N(1)-(5-phospho-beta-D-ribosyl)glycinamide + L-glutamine + ATP + H2O = 2-formamido-N(1)-(5-O-phospho-beta-D-ribosyl)acetamidine + L-glutamate + ADP + phosphate + H(+)</text>
        <dbReference type="Rhea" id="RHEA:17129"/>
        <dbReference type="ChEBI" id="CHEBI:15377"/>
        <dbReference type="ChEBI" id="CHEBI:15378"/>
        <dbReference type="ChEBI" id="CHEBI:29985"/>
        <dbReference type="ChEBI" id="CHEBI:30616"/>
        <dbReference type="ChEBI" id="CHEBI:43474"/>
        <dbReference type="ChEBI" id="CHEBI:58359"/>
        <dbReference type="ChEBI" id="CHEBI:147286"/>
        <dbReference type="ChEBI" id="CHEBI:147287"/>
        <dbReference type="ChEBI" id="CHEBI:456216"/>
        <dbReference type="EC" id="6.3.5.3"/>
    </reaction>
</comment>
<comment type="pathway">
    <text evidence="1">Purine metabolism; IMP biosynthesis via de novo pathway; 5-amino-1-(5-phospho-D-ribosyl)imidazole from N(2)-formyl-N(1)-(5-phospho-D-ribosyl)glycinamide: step 1/2.</text>
</comment>
<comment type="subunit">
    <text evidence="1">Monomer. Part of the FGAM synthase complex composed of 1 PurL, 1 PurQ and 2 PurS subunits.</text>
</comment>
<comment type="subcellular location">
    <subcellularLocation>
        <location evidence="1">Cytoplasm</location>
    </subcellularLocation>
</comment>
<comment type="similarity">
    <text evidence="1">Belongs to the FGAMS family.</text>
</comment>
<name>PURL_LISMH</name>
<proteinExistence type="inferred from homology"/>
<dbReference type="EC" id="6.3.5.3" evidence="1"/>
<dbReference type="EMBL" id="CP001175">
    <property type="protein sequence ID" value="ACK39147.1"/>
    <property type="molecule type" value="Genomic_DNA"/>
</dbReference>
<dbReference type="RefSeq" id="WP_012581149.1">
    <property type="nucleotide sequence ID" value="NC_011660.1"/>
</dbReference>
<dbReference type="SMR" id="B8DDY8"/>
<dbReference type="KEGG" id="lmh:LMHCC_0795"/>
<dbReference type="HOGENOM" id="CLU_003100_0_1_9"/>
<dbReference type="UniPathway" id="UPA00074">
    <property type="reaction ID" value="UER00128"/>
</dbReference>
<dbReference type="GO" id="GO:0005737">
    <property type="term" value="C:cytoplasm"/>
    <property type="evidence" value="ECO:0007669"/>
    <property type="project" value="UniProtKB-SubCell"/>
</dbReference>
<dbReference type="GO" id="GO:0005524">
    <property type="term" value="F:ATP binding"/>
    <property type="evidence" value="ECO:0007669"/>
    <property type="project" value="UniProtKB-UniRule"/>
</dbReference>
<dbReference type="GO" id="GO:0000287">
    <property type="term" value="F:magnesium ion binding"/>
    <property type="evidence" value="ECO:0007669"/>
    <property type="project" value="UniProtKB-UniRule"/>
</dbReference>
<dbReference type="GO" id="GO:0004642">
    <property type="term" value="F:phosphoribosylformylglycinamidine synthase activity"/>
    <property type="evidence" value="ECO:0007669"/>
    <property type="project" value="UniProtKB-UniRule"/>
</dbReference>
<dbReference type="GO" id="GO:0006189">
    <property type="term" value="P:'de novo' IMP biosynthetic process"/>
    <property type="evidence" value="ECO:0007669"/>
    <property type="project" value="UniProtKB-UniRule"/>
</dbReference>
<dbReference type="CDD" id="cd02203">
    <property type="entry name" value="PurL_repeat1"/>
    <property type="match status" value="1"/>
</dbReference>
<dbReference type="CDD" id="cd02204">
    <property type="entry name" value="PurL_repeat2"/>
    <property type="match status" value="1"/>
</dbReference>
<dbReference type="FunFam" id="3.30.1330.10:FF:000004">
    <property type="entry name" value="Phosphoribosylformylglycinamidine synthase subunit PurL"/>
    <property type="match status" value="1"/>
</dbReference>
<dbReference type="FunFam" id="3.90.650.10:FF:000009">
    <property type="entry name" value="Phosphoribosylformylglycinamidine synthase subunit PurL"/>
    <property type="match status" value="1"/>
</dbReference>
<dbReference type="FunFam" id="3.90.650.10:FF:000013">
    <property type="entry name" value="Phosphoribosylformylglycinamidine synthase subunit PurL"/>
    <property type="match status" value="1"/>
</dbReference>
<dbReference type="Gene3D" id="3.90.650.10">
    <property type="entry name" value="PurM-like C-terminal domain"/>
    <property type="match status" value="2"/>
</dbReference>
<dbReference type="Gene3D" id="3.30.1330.10">
    <property type="entry name" value="PurM-like, N-terminal domain"/>
    <property type="match status" value="2"/>
</dbReference>
<dbReference type="HAMAP" id="MF_00420">
    <property type="entry name" value="PurL_2"/>
    <property type="match status" value="1"/>
</dbReference>
<dbReference type="InterPro" id="IPR010074">
    <property type="entry name" value="PRibForGlyAmidine_synth_PurL"/>
</dbReference>
<dbReference type="InterPro" id="IPR041609">
    <property type="entry name" value="PurL_linker"/>
</dbReference>
<dbReference type="InterPro" id="IPR010918">
    <property type="entry name" value="PurM-like_C_dom"/>
</dbReference>
<dbReference type="InterPro" id="IPR036676">
    <property type="entry name" value="PurM-like_C_sf"/>
</dbReference>
<dbReference type="InterPro" id="IPR016188">
    <property type="entry name" value="PurM-like_N"/>
</dbReference>
<dbReference type="InterPro" id="IPR036921">
    <property type="entry name" value="PurM-like_N_sf"/>
</dbReference>
<dbReference type="NCBIfam" id="TIGR01736">
    <property type="entry name" value="FGAM_synth_II"/>
    <property type="match status" value="1"/>
</dbReference>
<dbReference type="NCBIfam" id="NF002290">
    <property type="entry name" value="PRK01213.1"/>
    <property type="match status" value="1"/>
</dbReference>
<dbReference type="PANTHER" id="PTHR43555">
    <property type="entry name" value="PHOSPHORIBOSYLFORMYLGLYCINAMIDINE SYNTHASE SUBUNIT PURL"/>
    <property type="match status" value="1"/>
</dbReference>
<dbReference type="PANTHER" id="PTHR43555:SF1">
    <property type="entry name" value="PHOSPHORIBOSYLFORMYLGLYCINAMIDINE SYNTHASE SUBUNIT PURL"/>
    <property type="match status" value="1"/>
</dbReference>
<dbReference type="Pfam" id="PF00586">
    <property type="entry name" value="AIRS"/>
    <property type="match status" value="2"/>
</dbReference>
<dbReference type="Pfam" id="PF02769">
    <property type="entry name" value="AIRS_C"/>
    <property type="match status" value="2"/>
</dbReference>
<dbReference type="Pfam" id="PF18072">
    <property type="entry name" value="FGAR-AT_linker"/>
    <property type="match status" value="1"/>
</dbReference>
<dbReference type="PIRSF" id="PIRSF001587">
    <property type="entry name" value="FGAM_synthase_II"/>
    <property type="match status" value="1"/>
</dbReference>
<dbReference type="SUPFAM" id="SSF56042">
    <property type="entry name" value="PurM C-terminal domain-like"/>
    <property type="match status" value="2"/>
</dbReference>
<dbReference type="SUPFAM" id="SSF55326">
    <property type="entry name" value="PurM N-terminal domain-like"/>
    <property type="match status" value="2"/>
</dbReference>
<accession>B8DDY8</accession>
<organism>
    <name type="scientific">Listeria monocytogenes serotype 4a (strain HCC23)</name>
    <dbReference type="NCBI Taxonomy" id="552536"/>
    <lineage>
        <taxon>Bacteria</taxon>
        <taxon>Bacillati</taxon>
        <taxon>Bacillota</taxon>
        <taxon>Bacilli</taxon>
        <taxon>Bacillales</taxon>
        <taxon>Listeriaceae</taxon>
        <taxon>Listeria</taxon>
    </lineage>
</organism>
<gene>
    <name evidence="1" type="primary">purL</name>
    <name type="ordered locus">LMHCC_0795</name>
</gene>